<protein>
    <recommendedName>
        <fullName>Autoinducer 2 import ATP-binding protein LsrA</fullName>
        <shortName>AI-2 import ATP-binding protein LsrA</shortName>
        <ecNumber evidence="4">7.6.2.13</ecNumber>
    </recommendedName>
</protein>
<gene>
    <name type="primary">lsrA</name>
    <name type="ordered locus">STM4074</name>
</gene>
<name>LSRA_SALTY</name>
<reference key="1">
    <citation type="journal article" date="2001" name="Nature">
        <title>Complete genome sequence of Salmonella enterica serovar Typhimurium LT2.</title>
        <authorList>
            <person name="McClelland M."/>
            <person name="Sanderson K.E."/>
            <person name="Spieth J."/>
            <person name="Clifton S.W."/>
            <person name="Latreille P."/>
            <person name="Courtney L."/>
            <person name="Porwollik S."/>
            <person name="Ali J."/>
            <person name="Dante M."/>
            <person name="Du F."/>
            <person name="Hou S."/>
            <person name="Layman D."/>
            <person name="Leonard S."/>
            <person name="Nguyen C."/>
            <person name="Scott K."/>
            <person name="Holmes A."/>
            <person name="Grewal N."/>
            <person name="Mulvaney E."/>
            <person name="Ryan E."/>
            <person name="Sun H."/>
            <person name="Florea L."/>
            <person name="Miller W."/>
            <person name="Stoneking T."/>
            <person name="Nhan M."/>
            <person name="Waterston R."/>
            <person name="Wilson R.K."/>
        </authorList>
    </citation>
    <scope>NUCLEOTIDE SEQUENCE [LARGE SCALE GENOMIC DNA]</scope>
    <source>
        <strain>LT2 / SGSC1412 / ATCC 700720</strain>
    </source>
</reference>
<reference key="2">
    <citation type="journal article" date="2001" name="Mol. Microbiol.">
        <title>The LuxS-dependent autoinducer AI-2 controls the expression of an ABC transporter that functions in AI-2 uptake in Salmonella typhimurium.</title>
        <authorList>
            <person name="Taga M.E."/>
            <person name="Semmelhack J.L."/>
            <person name="Bassler B.L."/>
        </authorList>
    </citation>
    <scope>FUNCTION IN AI-2 IMPORT</scope>
    <scope>INDUCTION</scope>
    <source>
        <strain>ATCC 14028 / SGSG 2980 / CDC 6516-60 / NCTC 12023</strain>
    </source>
</reference>
<evidence type="ECO:0000255" key="1">
    <source>
        <dbReference type="PROSITE-ProRule" id="PRU00434"/>
    </source>
</evidence>
<evidence type="ECO:0000269" key="2">
    <source>
    </source>
</evidence>
<evidence type="ECO:0000305" key="3"/>
<evidence type="ECO:0000305" key="4">
    <source>
    </source>
</evidence>
<keyword id="KW-0067">ATP-binding</keyword>
<keyword id="KW-0997">Cell inner membrane</keyword>
<keyword id="KW-1003">Cell membrane</keyword>
<keyword id="KW-0472">Membrane</keyword>
<keyword id="KW-0547">Nucleotide-binding</keyword>
<keyword id="KW-1185">Reference proteome</keyword>
<keyword id="KW-0677">Repeat</keyword>
<keyword id="KW-1278">Translocase</keyword>
<keyword id="KW-0813">Transport</keyword>
<feature type="chain" id="PRO_0000351304" description="Autoinducer 2 import ATP-binding protein LsrA">
    <location>
        <begin position="1"/>
        <end position="511"/>
    </location>
</feature>
<feature type="domain" description="ABC transporter 1" evidence="1">
    <location>
        <begin position="12"/>
        <end position="240"/>
    </location>
</feature>
<feature type="domain" description="ABC transporter 2" evidence="1">
    <location>
        <begin position="263"/>
        <end position="503"/>
    </location>
</feature>
<feature type="binding site" evidence="1">
    <location>
        <begin position="44"/>
        <end position="51"/>
    </location>
    <ligand>
        <name>ATP</name>
        <dbReference type="ChEBI" id="CHEBI:30616"/>
    </ligand>
</feature>
<accession>Q8ZKQ4</accession>
<dbReference type="EC" id="7.6.2.13" evidence="4"/>
<dbReference type="EMBL" id="AE006468">
    <property type="protein sequence ID" value="AAL22914.1"/>
    <property type="molecule type" value="Genomic_DNA"/>
</dbReference>
<dbReference type="RefSeq" id="WP_001167250.1">
    <property type="nucleotide sequence ID" value="NC_003197.2"/>
</dbReference>
<dbReference type="SMR" id="Q8ZKQ4"/>
<dbReference type="STRING" id="99287.STM4074"/>
<dbReference type="PaxDb" id="99287-STM4074"/>
<dbReference type="DNASU" id="1255601"/>
<dbReference type="KEGG" id="stm:STM4074"/>
<dbReference type="PATRIC" id="fig|99287.12.peg.4294"/>
<dbReference type="HOGENOM" id="CLU_000604_92_3_6"/>
<dbReference type="OMA" id="PQDRHKH"/>
<dbReference type="PhylomeDB" id="Q8ZKQ4"/>
<dbReference type="BioCyc" id="SENT99287:STM4074-MONOMER"/>
<dbReference type="Proteomes" id="UP000001014">
    <property type="component" value="Chromosome"/>
</dbReference>
<dbReference type="GO" id="GO:0005886">
    <property type="term" value="C:plasma membrane"/>
    <property type="evidence" value="ECO:0007669"/>
    <property type="project" value="UniProtKB-SubCell"/>
</dbReference>
<dbReference type="GO" id="GO:0005524">
    <property type="term" value="F:ATP binding"/>
    <property type="evidence" value="ECO:0007669"/>
    <property type="project" value="UniProtKB-KW"/>
</dbReference>
<dbReference type="GO" id="GO:0016887">
    <property type="term" value="F:ATP hydrolysis activity"/>
    <property type="evidence" value="ECO:0007669"/>
    <property type="project" value="InterPro"/>
</dbReference>
<dbReference type="CDD" id="cd03216">
    <property type="entry name" value="ABC_Carb_Monos_I"/>
    <property type="match status" value="1"/>
</dbReference>
<dbReference type="CDD" id="cd03215">
    <property type="entry name" value="ABC_Carb_Monos_II"/>
    <property type="match status" value="1"/>
</dbReference>
<dbReference type="Gene3D" id="3.40.50.300">
    <property type="entry name" value="P-loop containing nucleotide triphosphate hydrolases"/>
    <property type="match status" value="2"/>
</dbReference>
<dbReference type="InterPro" id="IPR003593">
    <property type="entry name" value="AAA+_ATPase"/>
</dbReference>
<dbReference type="InterPro" id="IPR050107">
    <property type="entry name" value="ABC_carbohydrate_import_ATPase"/>
</dbReference>
<dbReference type="InterPro" id="IPR003439">
    <property type="entry name" value="ABC_transporter-like_ATP-bd"/>
</dbReference>
<dbReference type="InterPro" id="IPR017871">
    <property type="entry name" value="ABC_transporter-like_CS"/>
</dbReference>
<dbReference type="InterPro" id="IPR027417">
    <property type="entry name" value="P-loop_NTPase"/>
</dbReference>
<dbReference type="NCBIfam" id="NF011967">
    <property type="entry name" value="PRK15439.1"/>
    <property type="match status" value="1"/>
</dbReference>
<dbReference type="PANTHER" id="PTHR43790:SF2">
    <property type="entry name" value="AUTOINDUCER 2 IMPORT ATP-BINDING PROTEIN LSRA"/>
    <property type="match status" value="1"/>
</dbReference>
<dbReference type="PANTHER" id="PTHR43790">
    <property type="entry name" value="CARBOHYDRATE TRANSPORT ATP-BINDING PROTEIN MG119-RELATED"/>
    <property type="match status" value="1"/>
</dbReference>
<dbReference type="Pfam" id="PF00005">
    <property type="entry name" value="ABC_tran"/>
    <property type="match status" value="2"/>
</dbReference>
<dbReference type="SMART" id="SM00382">
    <property type="entry name" value="AAA"/>
    <property type="match status" value="2"/>
</dbReference>
<dbReference type="SUPFAM" id="SSF52540">
    <property type="entry name" value="P-loop containing nucleoside triphosphate hydrolases"/>
    <property type="match status" value="2"/>
</dbReference>
<dbReference type="PROSITE" id="PS00211">
    <property type="entry name" value="ABC_TRANSPORTER_1"/>
    <property type="match status" value="1"/>
</dbReference>
<dbReference type="PROSITE" id="PS50893">
    <property type="entry name" value="ABC_TRANSPORTER_2"/>
    <property type="match status" value="2"/>
</dbReference>
<proteinExistence type="evidence at protein level"/>
<organism>
    <name type="scientific">Salmonella typhimurium (strain LT2 / SGSC1412 / ATCC 700720)</name>
    <dbReference type="NCBI Taxonomy" id="99287"/>
    <lineage>
        <taxon>Bacteria</taxon>
        <taxon>Pseudomonadati</taxon>
        <taxon>Pseudomonadota</taxon>
        <taxon>Gammaproteobacteria</taxon>
        <taxon>Enterobacterales</taxon>
        <taxon>Enterobacteriaceae</taxon>
        <taxon>Salmonella</taxon>
    </lineage>
</organism>
<sequence length="511" mass="55517">MQISHNTASPLICVQNIYKSYSGVEVLKGIDFTLHAGEVHALLGGNGAGKSTLMKIIAGIVPPDGGTIDIAGVRCSHLTPLKAHQYGIYLVPQEPLLFPSLSVRENILFGLQGRQASTEKMQQLLKAMGCQLDPASAAGTLDVADRQIVEIMRGLMRDSRILILDEPTASLTPAETDRLFTRLQELLKKGVGIVFISHKLPEIRQLAHCVSVMRDGKIALFGKTHDLSTDEIIQAITPATQGVSLSANQKLWLELPGSRPQNERGATVLALESLTGEGFMNINLEVRAGEILGLAGLVGAGRTELAETLYGIRPVNAGRMLFNGQEINALTTQQRLQLGLVYLPEDRQSSGLYLDASLAWNVCSLTHNQKGFWIKPQRDNATLERYHRALNIKLNNAEQAARTLSGGNQQKVLIAKCLEASPQLLIVDEPTRGVDVSARSDIYQLLRSIAQQNVAVLFISSDLEEIEQMADRVYVMHQGELGGPALCGEEINVDTIMHVAFGEHGASEATC</sequence>
<comment type="function">
    <text evidence="4">Part of the ABC transporter complex LsrABCD involved in autoinducer 2 (AI-2) import. Responsible for energy coupling to the transport system.</text>
</comment>
<comment type="catalytic activity">
    <reaction evidence="4">
        <text>ATP + H2O + (2R,4S)-2-methyl-2,3,3,4-tetrahydroxytetrahydrofuran-[AI-2-binding protein]Side 1 = ADP + phosphate + (2R,4S)-2-methyl-2,3,3,4-tetrahydroxytetrahydrofuranSide 2 + [AI-2-binding protein]Side 1.</text>
        <dbReference type="EC" id="7.6.2.13"/>
    </reaction>
</comment>
<comment type="subunit">
    <text evidence="3">The complex is composed of two ATP-binding proteins (LsrA), two transmembrane proteins (LsrC and LsrD) and a solute-binding protein (LsrB).</text>
</comment>
<comment type="subcellular location">
    <subcellularLocation>
        <location evidence="3">Cell inner membrane</location>
        <topology evidence="3">Peripheral membrane protein</topology>
    </subcellularLocation>
</comment>
<comment type="induction">
    <text evidence="2">In the absence of AI-2, repressed by LsrR. Induced by AI-2, via release of the LsrR repressor.</text>
</comment>
<comment type="similarity">
    <text evidence="3">Belongs to the ABC transporter superfamily. AI-2 autoinducer porter (TC 3.A.1.2.8) family.</text>
</comment>